<feature type="chain" id="PRO_0000106526" description="Tail tubular protein gp12">
    <location>
        <begin position="1"/>
        <end position="794"/>
    </location>
</feature>
<feature type="strand" evidence="3">
    <location>
        <begin position="4"/>
        <end position="9"/>
    </location>
</feature>
<feature type="turn" evidence="3">
    <location>
        <begin position="20"/>
        <end position="22"/>
    </location>
</feature>
<feature type="strand" evidence="3">
    <location>
        <begin position="28"/>
        <end position="37"/>
    </location>
</feature>
<feature type="turn" evidence="3">
    <location>
        <begin position="38"/>
        <end position="40"/>
    </location>
</feature>
<feature type="strand" evidence="3">
    <location>
        <begin position="41"/>
        <end position="44"/>
    </location>
</feature>
<feature type="strand" evidence="3">
    <location>
        <begin position="49"/>
        <end position="53"/>
    </location>
</feature>
<feature type="strand" evidence="3">
    <location>
        <begin position="56"/>
        <end position="58"/>
    </location>
</feature>
<feature type="strand" evidence="3">
    <location>
        <begin position="65"/>
        <end position="71"/>
    </location>
</feature>
<feature type="turn" evidence="3">
    <location>
        <begin position="72"/>
        <end position="74"/>
    </location>
</feature>
<feature type="strand" evidence="3">
    <location>
        <begin position="75"/>
        <end position="81"/>
    </location>
</feature>
<feature type="strand" evidence="3">
    <location>
        <begin position="88"/>
        <end position="90"/>
    </location>
</feature>
<feature type="turn" evidence="2">
    <location>
        <begin position="105"/>
        <end position="107"/>
    </location>
</feature>
<feature type="helix" evidence="3">
    <location>
        <begin position="112"/>
        <end position="115"/>
    </location>
</feature>
<feature type="strand" evidence="3">
    <location>
        <begin position="116"/>
        <end position="121"/>
    </location>
</feature>
<feature type="strand" evidence="3">
    <location>
        <begin position="124"/>
        <end position="131"/>
    </location>
</feature>
<feature type="strand" evidence="3">
    <location>
        <begin position="141"/>
        <end position="143"/>
    </location>
</feature>
<feature type="strand" evidence="3">
    <location>
        <begin position="150"/>
        <end position="156"/>
    </location>
</feature>
<feature type="strand" evidence="3">
    <location>
        <begin position="164"/>
        <end position="169"/>
    </location>
</feature>
<feature type="strand" evidence="3">
    <location>
        <begin position="172"/>
        <end position="178"/>
    </location>
</feature>
<feature type="helix" evidence="3">
    <location>
        <begin position="187"/>
        <end position="191"/>
    </location>
</feature>
<feature type="helix" evidence="3">
    <location>
        <begin position="193"/>
        <end position="207"/>
    </location>
</feature>
<feature type="strand" evidence="3">
    <location>
        <begin position="209"/>
        <end position="215"/>
    </location>
</feature>
<feature type="strand" evidence="3">
    <location>
        <begin position="217"/>
        <end position="223"/>
    </location>
</feature>
<feature type="strand" evidence="3">
    <location>
        <begin position="233"/>
        <end position="236"/>
    </location>
</feature>
<feature type="strand" evidence="2">
    <location>
        <begin position="238"/>
        <end position="240"/>
    </location>
</feature>
<feature type="strand" evidence="3">
    <location>
        <begin position="242"/>
        <end position="247"/>
    </location>
</feature>
<feature type="strand" evidence="2">
    <location>
        <begin position="249"/>
        <end position="252"/>
    </location>
</feature>
<feature type="helix" evidence="3">
    <location>
        <begin position="254"/>
        <end position="256"/>
    </location>
</feature>
<feature type="strand" evidence="3">
    <location>
        <begin position="266"/>
        <end position="268"/>
    </location>
</feature>
<feature type="strand" evidence="3">
    <location>
        <begin position="271"/>
        <end position="274"/>
    </location>
</feature>
<feature type="strand" evidence="3">
    <location>
        <begin position="281"/>
        <end position="285"/>
    </location>
</feature>
<feature type="turn" evidence="3">
    <location>
        <begin position="286"/>
        <end position="289"/>
    </location>
</feature>
<feature type="strand" evidence="3">
    <location>
        <begin position="290"/>
        <end position="293"/>
    </location>
</feature>
<feature type="strand" evidence="3">
    <location>
        <begin position="305"/>
        <end position="308"/>
    </location>
</feature>
<feature type="strand" evidence="3">
    <location>
        <begin position="310"/>
        <end position="314"/>
    </location>
</feature>
<feature type="strand" evidence="2">
    <location>
        <begin position="316"/>
        <end position="318"/>
    </location>
</feature>
<feature type="strand" evidence="3">
    <location>
        <begin position="320"/>
        <end position="323"/>
    </location>
</feature>
<feature type="turn" evidence="3">
    <location>
        <begin position="335"/>
        <end position="337"/>
    </location>
</feature>
<feature type="helix" evidence="3">
    <location>
        <begin position="342"/>
        <end position="344"/>
    </location>
</feature>
<feature type="strand" evidence="3">
    <location>
        <begin position="351"/>
        <end position="354"/>
    </location>
</feature>
<feature type="strand" evidence="3">
    <location>
        <begin position="357"/>
        <end position="362"/>
    </location>
</feature>
<feature type="strand" evidence="3">
    <location>
        <begin position="365"/>
        <end position="368"/>
    </location>
</feature>
<feature type="strand" evidence="2">
    <location>
        <begin position="382"/>
        <end position="384"/>
    </location>
</feature>
<feature type="strand" evidence="2">
    <location>
        <begin position="387"/>
        <end position="389"/>
    </location>
</feature>
<feature type="strand" evidence="3">
    <location>
        <begin position="397"/>
        <end position="399"/>
    </location>
</feature>
<feature type="strand" evidence="3">
    <location>
        <begin position="405"/>
        <end position="408"/>
    </location>
</feature>
<feature type="strand" evidence="3">
    <location>
        <begin position="413"/>
        <end position="416"/>
    </location>
</feature>
<feature type="strand" evidence="3">
    <location>
        <begin position="421"/>
        <end position="428"/>
    </location>
</feature>
<feature type="strand" evidence="3">
    <location>
        <begin position="432"/>
        <end position="441"/>
    </location>
</feature>
<feature type="strand" evidence="2">
    <location>
        <begin position="447"/>
        <end position="449"/>
    </location>
</feature>
<feature type="strand" evidence="3">
    <location>
        <begin position="452"/>
        <end position="454"/>
    </location>
</feature>
<feature type="strand" evidence="3">
    <location>
        <begin position="457"/>
        <end position="462"/>
    </location>
</feature>
<feature type="strand" evidence="3">
    <location>
        <begin position="465"/>
        <end position="467"/>
    </location>
</feature>
<feature type="strand" evidence="3">
    <location>
        <begin position="469"/>
        <end position="473"/>
    </location>
</feature>
<feature type="helix" evidence="3">
    <location>
        <begin position="479"/>
        <end position="481"/>
    </location>
</feature>
<feature type="strand" evidence="2">
    <location>
        <begin position="483"/>
        <end position="487"/>
    </location>
</feature>
<feature type="turn" evidence="2">
    <location>
        <begin position="488"/>
        <end position="491"/>
    </location>
</feature>
<feature type="strand" evidence="3">
    <location>
        <begin position="493"/>
        <end position="498"/>
    </location>
</feature>
<feature type="strand" evidence="3">
    <location>
        <begin position="500"/>
        <end position="502"/>
    </location>
</feature>
<feature type="turn" evidence="3">
    <location>
        <begin position="507"/>
        <end position="510"/>
    </location>
</feature>
<feature type="strand" evidence="3">
    <location>
        <begin position="514"/>
        <end position="519"/>
    </location>
</feature>
<feature type="strand" evidence="3">
    <location>
        <begin position="522"/>
        <end position="533"/>
    </location>
</feature>
<feature type="strand" evidence="3">
    <location>
        <begin position="535"/>
        <end position="544"/>
    </location>
</feature>
<feature type="strand" evidence="3">
    <location>
        <begin position="551"/>
        <end position="553"/>
    </location>
</feature>
<feature type="strand" evidence="3">
    <location>
        <begin position="556"/>
        <end position="566"/>
    </location>
</feature>
<feature type="strand" evidence="3">
    <location>
        <begin position="571"/>
        <end position="577"/>
    </location>
</feature>
<feature type="strand" evidence="3">
    <location>
        <begin position="595"/>
        <end position="601"/>
    </location>
</feature>
<feature type="helix" evidence="2">
    <location>
        <begin position="604"/>
        <end position="606"/>
    </location>
</feature>
<feature type="turn" evidence="3">
    <location>
        <begin position="609"/>
        <end position="612"/>
    </location>
</feature>
<feature type="strand" evidence="3">
    <location>
        <begin position="613"/>
        <end position="617"/>
    </location>
</feature>
<feature type="helix" evidence="3">
    <location>
        <begin position="618"/>
        <end position="621"/>
    </location>
</feature>
<feature type="strand" evidence="3">
    <location>
        <begin position="622"/>
        <end position="624"/>
    </location>
</feature>
<feature type="strand" evidence="3">
    <location>
        <begin position="631"/>
        <end position="634"/>
    </location>
</feature>
<feature type="strand" evidence="2">
    <location>
        <begin position="636"/>
        <end position="638"/>
    </location>
</feature>
<feature type="strand" evidence="3">
    <location>
        <begin position="640"/>
        <end position="642"/>
    </location>
</feature>
<feature type="turn" evidence="3">
    <location>
        <begin position="650"/>
        <end position="652"/>
    </location>
</feature>
<feature type="strand" evidence="3">
    <location>
        <begin position="655"/>
        <end position="660"/>
    </location>
</feature>
<feature type="strand" evidence="3">
    <location>
        <begin position="666"/>
        <end position="671"/>
    </location>
</feature>
<feature type="strand" evidence="3">
    <location>
        <begin position="675"/>
        <end position="679"/>
    </location>
</feature>
<feature type="strand" evidence="3">
    <location>
        <begin position="685"/>
        <end position="687"/>
    </location>
</feature>
<feature type="strand" evidence="3">
    <location>
        <begin position="689"/>
        <end position="691"/>
    </location>
</feature>
<feature type="strand" evidence="3">
    <location>
        <begin position="693"/>
        <end position="695"/>
    </location>
</feature>
<feature type="strand" evidence="3">
    <location>
        <begin position="703"/>
        <end position="713"/>
    </location>
</feature>
<feature type="strand" evidence="3">
    <location>
        <begin position="717"/>
        <end position="721"/>
    </location>
</feature>
<feature type="strand" evidence="3">
    <location>
        <begin position="726"/>
        <end position="730"/>
    </location>
</feature>
<feature type="strand" evidence="2">
    <location>
        <begin position="733"/>
        <end position="735"/>
    </location>
</feature>
<feature type="strand" evidence="3">
    <location>
        <begin position="736"/>
        <end position="738"/>
    </location>
</feature>
<feature type="strand" evidence="2">
    <location>
        <begin position="742"/>
        <end position="745"/>
    </location>
</feature>
<feature type="strand" evidence="3">
    <location>
        <begin position="749"/>
        <end position="755"/>
    </location>
</feature>
<feature type="strand" evidence="3">
    <location>
        <begin position="761"/>
        <end position="763"/>
    </location>
</feature>
<feature type="strand" evidence="3">
    <location>
        <begin position="765"/>
        <end position="770"/>
    </location>
</feature>
<feature type="strand" evidence="3">
    <location>
        <begin position="772"/>
        <end position="774"/>
    </location>
</feature>
<feature type="strand" evidence="3">
    <location>
        <begin position="781"/>
        <end position="786"/>
    </location>
</feature>
<name>TUBE2_BPT7</name>
<sequence>MALISQSIKNLKGGISQQPDILRYPDQGSRQVNGWSSETEGLQKRPPLVFLNTLGDNGALGQAPYIHLINRDEHEQYYAVFTGSGIRVFDLSGNEKQVRYPNGSNYIKTANPRNDLRMVTVADYTFIVNRNVVAQKNTKSVNLPNYNPNQDGLINVRGGQYGRELIVHINGKDVAKYKIPDGSQPEHVNNTDAQWLAEELAKQMRTNLSDWTVNVGQGFIHVTAPSGQQIDSFTTKDGYADQLINPVTHYAQSFSKLPPNAPNGYMVKIVGDASKSADQYYVRYDAERKVWTETLGWNTEDQVLWETMPHALVRAADGNFDFKWLEWSPKSCGDVDTNPWPSFVGSSINDVFFFRNRLGFLSGENIILSRTAKYFNFYPASIANLSDDDPIDVAVSTNRIAILKYAVPFSEELLIWSDEAQFVLTASGTLTSKSVELNLTTQFDVQDRARPFGIGRNVYFASPRSSFTSIHRYYAVQDVSSVKNAEDITSHVPNYIPNGVFSICGSGTENFCSVLSHGDPSKIFMYKFLYLNEELRQQSWSHWDFGENVQVLACQSISSDMYVILRNEFNTFLARISFTKNAIDLQGEPYRAFMDMKIRYTIPSGTYNDDTFTTSIHIPTIYGANFGRGKITVLEPDGKITVFEQPTAGWNSDPWLRLSGNLEGRMVYIGFNINFVYEFSKFLIKQTADDGSTSTEDIGRLQLRRAWVNYENSGTFDIYVENQSSNWKYTMAGARLGSNTLRAGRLNLGTGQYRFPVVGNAKFNTVYILSDETTPLNIIGCGWEGNYLRRSSGI</sequence>
<accession>P03747</accession>
<proteinExistence type="evidence at protein level"/>
<gene>
    <name type="ordered locus">12</name>
</gene>
<dbReference type="EMBL" id="V01146">
    <property type="protein sequence ID" value="CAA24430.1"/>
    <property type="molecule type" value="Genomic_DNA"/>
</dbReference>
<dbReference type="PIR" id="A04372">
    <property type="entry name" value="TLBPB7"/>
</dbReference>
<dbReference type="RefSeq" id="NP_042000.1">
    <property type="nucleotide sequence ID" value="NC_001604.1"/>
</dbReference>
<dbReference type="PDB" id="6R21">
    <property type="method" value="EM"/>
    <property type="resolution" value="3.33 A"/>
    <property type="chains" value="a/b/c/d/e/f=1-794"/>
</dbReference>
<dbReference type="PDB" id="7BOY">
    <property type="method" value="EM"/>
    <property type="resolution" value="3.80 A"/>
    <property type="chains" value="s/t/u/v/w/x=1-794"/>
</dbReference>
<dbReference type="PDB" id="7EY7">
    <property type="method" value="EM"/>
    <property type="resolution" value="4.30 A"/>
    <property type="chains" value="s/t/u/v/w/x=1-794"/>
</dbReference>
<dbReference type="PDB" id="7EY9">
    <property type="method" value="EM"/>
    <property type="resolution" value="3.40 A"/>
    <property type="chains" value="s/t/u/v/w/x=1-794"/>
</dbReference>
<dbReference type="PDB" id="8E4G">
    <property type="method" value="EM"/>
    <property type="resolution" value="3.20 A"/>
    <property type="chains" value="P=1-794"/>
</dbReference>
<dbReference type="PDB" id="9JYZ">
    <property type="method" value="EM"/>
    <property type="resolution" value="2.70 A"/>
    <property type="chains" value="P/Q/R/S/T/x=1-794"/>
</dbReference>
<dbReference type="PDB" id="9JZ0">
    <property type="method" value="EM"/>
    <property type="resolution" value="3.50 A"/>
    <property type="chains" value="s/t/u/v/w/x=1-794"/>
</dbReference>
<dbReference type="PDBsum" id="6R21"/>
<dbReference type="PDBsum" id="7BOY"/>
<dbReference type="PDBsum" id="7EY7"/>
<dbReference type="PDBsum" id="7EY9"/>
<dbReference type="PDBsum" id="8E4G"/>
<dbReference type="PDBsum" id="9JYZ"/>
<dbReference type="PDBsum" id="9JZ0"/>
<dbReference type="EMDB" id="EMD-30136"/>
<dbReference type="EMDB" id="EMD-4706"/>
<dbReference type="EMDB" id="EMD-61910"/>
<dbReference type="EMDB" id="EMD-61911"/>
<dbReference type="SMR" id="P03747"/>
<dbReference type="MINT" id="P03747"/>
<dbReference type="KEGG" id="vg:1261024"/>
<dbReference type="OrthoDB" id="780at10239"/>
<dbReference type="Proteomes" id="UP000000840">
    <property type="component" value="Genome"/>
</dbReference>
<dbReference type="GO" id="GO:0098026">
    <property type="term" value="C:virus tail, tube"/>
    <property type="evidence" value="ECO:0007669"/>
    <property type="project" value="UniProtKB-KW"/>
</dbReference>
<dbReference type="GO" id="GO:0099002">
    <property type="term" value="P:symbiont genome ejection through host cell envelope, short tail mechanism"/>
    <property type="evidence" value="ECO:0007669"/>
    <property type="project" value="UniProtKB-KW"/>
</dbReference>
<keyword id="KW-0002">3D-structure</keyword>
<keyword id="KW-1185">Reference proteome</keyword>
<keyword id="KW-1171">Viral genome ejection through host cell envelope</keyword>
<keyword id="KW-1162">Viral penetration into host cytoplasm</keyword>
<keyword id="KW-1244">Viral short tail ejection system</keyword>
<keyword id="KW-1227">Viral tail protein</keyword>
<keyword id="KW-1228">Viral tail tube protein</keyword>
<keyword id="KW-0946">Virion</keyword>
<keyword id="KW-1160">Virus entry into host cell</keyword>
<comment type="function">
    <text evidence="1">Structural component of the short non-contractile tail. The tail complex is involved in viral genome delivery. Forms the end of the tail, including the canonical tube, the nozzle, and the small extensions below the fibers. Once the tail tubular structure is formed, the interface between gp11 and gp12 generates the proper environment to interact with the six gp17 trimers.</text>
</comment>
<comment type="subunit">
    <text evidence="1">Interacts with head-to-tail connector protein gp8, the tail component gp11, and the fiber protein gp17.</text>
</comment>
<comment type="subcellular location">
    <subcellularLocation>
        <location evidence="1">Virion</location>
    </subcellularLocation>
</comment>
<reference key="1">
    <citation type="journal article" date="1983" name="J. Mol. Biol.">
        <title>Complete nucleotide sequence of bacteriophage T7 DNA and the locations of T7 genetic elements.</title>
        <authorList>
            <person name="Dunn J.J."/>
            <person name="Studier F.W."/>
        </authorList>
    </citation>
    <scope>NUCLEOTIDE SEQUENCE [LARGE SCALE GENOMIC DNA]</scope>
</reference>
<reference key="2">
    <citation type="journal article" date="2013" name="J. Biol. Chem.">
        <title>Structural characterization of the bacteriophage T7 tail machinery.</title>
        <authorList>
            <person name="Cuervo A."/>
            <person name="Pulido-Cid M."/>
            <person name="Chagoyen M."/>
            <person name="Arranz R."/>
            <person name="Gonzalez-Garcia V.A."/>
            <person name="Garcia-Doval C."/>
            <person name="Caston J.R."/>
            <person name="Valpuesta J.M."/>
            <person name="van Raaij M.J."/>
            <person name="Martin-Benito J."/>
            <person name="Carrascosa J.L."/>
        </authorList>
    </citation>
    <scope>FUNCTION</scope>
    <scope>SUBCELLULAR LOCATION</scope>
    <scope>INTERACTION WITH GP8; GP11 AND GP17</scope>
</reference>
<protein>
    <recommendedName>
        <fullName>Tail tubular protein gp12</fullName>
    </recommendedName>
    <alternativeName>
        <fullName>Gene product 12</fullName>
        <shortName>Gp12</shortName>
    </alternativeName>
</protein>
<organismHost>
    <name type="scientific">Escherichia coli</name>
    <dbReference type="NCBI Taxonomy" id="562"/>
</organismHost>
<evidence type="ECO:0000269" key="1">
    <source>
    </source>
</evidence>
<evidence type="ECO:0007829" key="2">
    <source>
        <dbReference type="PDB" id="7EY9"/>
    </source>
</evidence>
<evidence type="ECO:0007829" key="3">
    <source>
        <dbReference type="PDB" id="8E4G"/>
    </source>
</evidence>
<organism>
    <name type="scientific">Escherichia phage T7</name>
    <name type="common">Bacteriophage T7</name>
    <dbReference type="NCBI Taxonomy" id="10760"/>
    <lineage>
        <taxon>Viruses</taxon>
        <taxon>Duplodnaviria</taxon>
        <taxon>Heunggongvirae</taxon>
        <taxon>Uroviricota</taxon>
        <taxon>Caudoviricetes</taxon>
        <taxon>Autographiviridae</taxon>
        <taxon>Studiervirinae</taxon>
        <taxon>Teseptimavirus</taxon>
        <taxon>Teseptimavirus T7</taxon>
    </lineage>
</organism>